<sequence length="21" mass="2124">MNRISTTTITTITITTGNGAG</sequence>
<name>LPT_SALG2</name>
<reference key="1">
    <citation type="journal article" date="2008" name="Genome Res.">
        <title>Comparative genome analysis of Salmonella enteritidis PT4 and Salmonella gallinarum 287/91 provides insights into evolutionary and host adaptation pathways.</title>
        <authorList>
            <person name="Thomson N.R."/>
            <person name="Clayton D.J."/>
            <person name="Windhorst D."/>
            <person name="Vernikos G."/>
            <person name="Davidson S."/>
            <person name="Churcher C."/>
            <person name="Quail M.A."/>
            <person name="Stevens M."/>
            <person name="Jones M.A."/>
            <person name="Watson M."/>
            <person name="Barron A."/>
            <person name="Layton A."/>
            <person name="Pickard D."/>
            <person name="Kingsley R.A."/>
            <person name="Bignell A."/>
            <person name="Clark L."/>
            <person name="Harris B."/>
            <person name="Ormond D."/>
            <person name="Abdellah Z."/>
            <person name="Brooks K."/>
            <person name="Cherevach I."/>
            <person name="Chillingworth T."/>
            <person name="Woodward J."/>
            <person name="Norberczak H."/>
            <person name="Lord A."/>
            <person name="Arrowsmith C."/>
            <person name="Jagels K."/>
            <person name="Moule S."/>
            <person name="Mungall K."/>
            <person name="Saunders M."/>
            <person name="Whitehead S."/>
            <person name="Chabalgoity J.A."/>
            <person name="Maskell D."/>
            <person name="Humphreys T."/>
            <person name="Roberts M."/>
            <person name="Barrow P.A."/>
            <person name="Dougan G."/>
            <person name="Parkhill J."/>
        </authorList>
    </citation>
    <scope>NUCLEOTIDE SEQUENCE [LARGE SCALE GENOMIC DNA]</scope>
    <source>
        <strain>287/91 / NCTC 13346</strain>
    </source>
</reference>
<organism>
    <name type="scientific">Salmonella gallinarum (strain 287/91 / NCTC 13346)</name>
    <dbReference type="NCBI Taxonomy" id="550538"/>
    <lineage>
        <taxon>Bacteria</taxon>
        <taxon>Pseudomonadati</taxon>
        <taxon>Pseudomonadota</taxon>
        <taxon>Gammaproteobacteria</taxon>
        <taxon>Enterobacterales</taxon>
        <taxon>Enterobacteriaceae</taxon>
        <taxon>Salmonella</taxon>
    </lineage>
</organism>
<keyword id="KW-0028">Amino-acid biosynthesis</keyword>
<keyword id="KW-0428">Leader peptide</keyword>
<keyword id="KW-0791">Threonine biosynthesis</keyword>
<protein>
    <recommendedName>
        <fullName evidence="1">thr operon leader peptide</fullName>
    </recommendedName>
    <alternativeName>
        <fullName evidence="1">thr operon attenuator</fullName>
    </alternativeName>
</protein>
<comment type="function">
    <text evidence="1">This protein is involved in control of the biosynthesis of threonine.</text>
</comment>
<comment type="similarity">
    <text evidence="1">Belongs to the thr operon leader peptide family.</text>
</comment>
<feature type="peptide" id="PRO_1000188782" description="thr operon leader peptide">
    <location>
        <begin position="1"/>
        <end position="21"/>
    </location>
</feature>
<evidence type="ECO:0000255" key="1">
    <source>
        <dbReference type="HAMAP-Rule" id="MF_01907"/>
    </source>
</evidence>
<proteinExistence type="inferred from homology"/>
<dbReference type="EMBL" id="AM933173">
    <property type="protein sequence ID" value="CAR35911.1"/>
    <property type="molecule type" value="Genomic_DNA"/>
</dbReference>
<dbReference type="RefSeq" id="WP_001575544.1">
    <property type="nucleotide sequence ID" value="NC_011274.1"/>
</dbReference>
<dbReference type="KEGG" id="seg:SG0001"/>
<dbReference type="HOGENOM" id="CLU_221491_0_1_6"/>
<dbReference type="Proteomes" id="UP000008321">
    <property type="component" value="Chromosome"/>
</dbReference>
<dbReference type="GO" id="GO:0009088">
    <property type="term" value="P:threonine biosynthetic process"/>
    <property type="evidence" value="ECO:0007669"/>
    <property type="project" value="UniProtKB-UniRule"/>
</dbReference>
<dbReference type="GO" id="GO:0031556">
    <property type="term" value="P:transcriptional attenuation by ribosome"/>
    <property type="evidence" value="ECO:0007669"/>
    <property type="project" value="UniProtKB-UniRule"/>
</dbReference>
<dbReference type="HAMAP" id="MF_01907">
    <property type="entry name" value="Leader_Thr"/>
    <property type="match status" value="1"/>
</dbReference>
<dbReference type="InterPro" id="IPR011720">
    <property type="entry name" value="Thr_lead_pept"/>
</dbReference>
<dbReference type="NCBIfam" id="NF007329">
    <property type="entry name" value="PRK09816.1"/>
    <property type="match status" value="1"/>
</dbReference>
<dbReference type="NCBIfam" id="TIGR02077">
    <property type="entry name" value="thr_lead_pep"/>
    <property type="match status" value="1"/>
</dbReference>
<dbReference type="Pfam" id="PF08254">
    <property type="entry name" value="Leader_Thr"/>
    <property type="match status" value="1"/>
</dbReference>
<gene>
    <name evidence="1" type="primary">thrL</name>
    <name type="ordered locus">SG0001</name>
</gene>
<accession>B5REZ7</accession>